<proteinExistence type="inferred from homology"/>
<organism>
    <name type="scientific">Escherichia coli O157:H7 (strain EC4115 / EHEC)</name>
    <dbReference type="NCBI Taxonomy" id="444450"/>
    <lineage>
        <taxon>Bacteria</taxon>
        <taxon>Pseudomonadati</taxon>
        <taxon>Pseudomonadota</taxon>
        <taxon>Gammaproteobacteria</taxon>
        <taxon>Enterobacterales</taxon>
        <taxon>Enterobacteriaceae</taxon>
        <taxon>Escherichia</taxon>
    </lineage>
</organism>
<accession>B5YXW9</accession>
<reference key="1">
    <citation type="journal article" date="2011" name="Proc. Natl. Acad. Sci. U.S.A.">
        <title>Genomic anatomy of Escherichia coli O157:H7 outbreaks.</title>
        <authorList>
            <person name="Eppinger M."/>
            <person name="Mammel M.K."/>
            <person name="Leclerc J.E."/>
            <person name="Ravel J."/>
            <person name="Cebula T.A."/>
        </authorList>
    </citation>
    <scope>NUCLEOTIDE SEQUENCE [LARGE SCALE GENOMIC DNA]</scope>
    <source>
        <strain>EC4115 / EHEC</strain>
    </source>
</reference>
<name>MEPA_ECO5E</name>
<evidence type="ECO:0000255" key="1">
    <source>
        <dbReference type="HAMAP-Rule" id="MF_01623"/>
    </source>
</evidence>
<evidence type="ECO:0000256" key="2">
    <source>
        <dbReference type="SAM" id="MobiDB-lite"/>
    </source>
</evidence>
<gene>
    <name evidence="1" type="primary">mepA</name>
    <name type="ordered locus">ECH74115_3469</name>
</gene>
<feature type="signal peptide" evidence="1">
    <location>
        <begin position="1"/>
        <end position="19"/>
    </location>
</feature>
<feature type="chain" id="PRO_1000186095" description="Penicillin-insensitive murein endopeptidase">
    <location>
        <begin position="20"/>
        <end position="274"/>
    </location>
</feature>
<feature type="region of interest" description="Disordered" evidence="2">
    <location>
        <begin position="227"/>
        <end position="274"/>
    </location>
</feature>
<feature type="binding site" evidence="1">
    <location>
        <position position="110"/>
    </location>
    <ligand>
        <name>Zn(2+)</name>
        <dbReference type="ChEBI" id="CHEBI:29105"/>
        <label>1</label>
    </ligand>
</feature>
<feature type="binding site" evidence="1">
    <location>
        <position position="113"/>
    </location>
    <ligand>
        <name>Zn(2+)</name>
        <dbReference type="ChEBI" id="CHEBI:29105"/>
        <label>1</label>
    </ligand>
</feature>
<feature type="binding site" evidence="1">
    <location>
        <position position="120"/>
    </location>
    <ligand>
        <name>Zn(2+)</name>
        <dbReference type="ChEBI" id="CHEBI:29105"/>
        <label>1</label>
    </ligand>
</feature>
<feature type="binding site" evidence="1">
    <location>
        <position position="147"/>
    </location>
    <ligand>
        <name>Zn(2+)</name>
        <dbReference type="ChEBI" id="CHEBI:29105"/>
        <label>2</label>
    </ligand>
</feature>
<feature type="binding site" evidence="1">
    <location>
        <position position="150"/>
    </location>
    <ligand>
        <name>Zn(2+)</name>
        <dbReference type="ChEBI" id="CHEBI:29105"/>
        <label>2</label>
    </ligand>
</feature>
<feature type="binding site" evidence="1">
    <location>
        <position position="211"/>
    </location>
    <ligand>
        <name>Zn(2+)</name>
        <dbReference type="ChEBI" id="CHEBI:29105"/>
        <label>1</label>
    </ligand>
</feature>
<feature type="disulfide bond" evidence="1">
    <location>
        <begin position="44"/>
        <end position="265"/>
    </location>
</feature>
<feature type="disulfide bond" evidence="1">
    <location>
        <begin position="187"/>
        <end position="235"/>
    </location>
</feature>
<feature type="disulfide bond" evidence="1">
    <location>
        <begin position="216"/>
        <end position="223"/>
    </location>
</feature>
<sequence>MNKTAIALLALLASSVSLAATPWQKITQPVPGSAQSIGSFSNGCIVGADTLPIQSEHYQVMRTDQRRYFGHPDLVMFIQRLSSQVSNLGMGTVLIGDMGMPAGGRFNGGHASHQTGLDVDIFLQLPKTRRTSAQLLRPQALDLVSRDGKHVVSTLWKPEIFSLIKLAAQDKDVTRIFVNPAIKQQLCLDAGTDRDWLRKVRPWFQHRAHMHVRLRCPADSLECEDQPLPPPGDGCGAELQSWFEPPKPGTTKPEKKTPPPLPPSCQALLDEHVI</sequence>
<dbReference type="EC" id="3.4.24.-" evidence="1"/>
<dbReference type="EMBL" id="CP001164">
    <property type="protein sequence ID" value="ACI34907.1"/>
    <property type="molecule type" value="Genomic_DNA"/>
</dbReference>
<dbReference type="RefSeq" id="WP_001043834.1">
    <property type="nucleotide sequence ID" value="NC_011353.1"/>
</dbReference>
<dbReference type="SMR" id="B5YXW9"/>
<dbReference type="MEROPS" id="M74.001"/>
<dbReference type="KEGG" id="ecf:ECH74115_3469"/>
<dbReference type="HOGENOM" id="CLU_052496_0_0_6"/>
<dbReference type="GO" id="GO:0030288">
    <property type="term" value="C:outer membrane-bounded periplasmic space"/>
    <property type="evidence" value="ECO:0007669"/>
    <property type="project" value="InterPro"/>
</dbReference>
<dbReference type="GO" id="GO:0046872">
    <property type="term" value="F:metal ion binding"/>
    <property type="evidence" value="ECO:0007669"/>
    <property type="project" value="UniProtKB-KW"/>
</dbReference>
<dbReference type="GO" id="GO:0004222">
    <property type="term" value="F:metalloendopeptidase activity"/>
    <property type="evidence" value="ECO:0007669"/>
    <property type="project" value="UniProtKB-UniRule"/>
</dbReference>
<dbReference type="GO" id="GO:0004252">
    <property type="term" value="F:serine-type endopeptidase activity"/>
    <property type="evidence" value="ECO:0007669"/>
    <property type="project" value="InterPro"/>
</dbReference>
<dbReference type="GO" id="GO:0000270">
    <property type="term" value="P:peptidoglycan metabolic process"/>
    <property type="evidence" value="ECO:0007669"/>
    <property type="project" value="UniProtKB-UniRule"/>
</dbReference>
<dbReference type="GO" id="GO:0006508">
    <property type="term" value="P:proteolysis"/>
    <property type="evidence" value="ECO:0007669"/>
    <property type="project" value="UniProtKB-KW"/>
</dbReference>
<dbReference type="FunFam" id="3.30.1380.10:FF:000002">
    <property type="entry name" value="Penicillin-insensitive murein endopeptidase"/>
    <property type="match status" value="1"/>
</dbReference>
<dbReference type="Gene3D" id="3.30.1380.10">
    <property type="match status" value="1"/>
</dbReference>
<dbReference type="HAMAP" id="MF_01623">
    <property type="entry name" value="MepA"/>
    <property type="match status" value="1"/>
</dbReference>
<dbReference type="InterPro" id="IPR009045">
    <property type="entry name" value="Hedgehog_sig/DD-Pept_Zn-bd_sf"/>
</dbReference>
<dbReference type="InterPro" id="IPR005073">
    <property type="entry name" value="Peptidase_M74"/>
</dbReference>
<dbReference type="NCBIfam" id="NF006947">
    <property type="entry name" value="PRK09429.1"/>
    <property type="match status" value="1"/>
</dbReference>
<dbReference type="Pfam" id="PF03411">
    <property type="entry name" value="Peptidase_M74"/>
    <property type="match status" value="1"/>
</dbReference>
<dbReference type="PIRSF" id="PIRSF018455">
    <property type="entry name" value="MepA"/>
    <property type="match status" value="1"/>
</dbReference>
<dbReference type="SUPFAM" id="SSF55166">
    <property type="entry name" value="Hedgehog/DD-peptidase"/>
    <property type="match status" value="1"/>
</dbReference>
<keyword id="KW-1015">Disulfide bond</keyword>
<keyword id="KW-0378">Hydrolase</keyword>
<keyword id="KW-0479">Metal-binding</keyword>
<keyword id="KW-0482">Metalloprotease</keyword>
<keyword id="KW-0574">Periplasm</keyword>
<keyword id="KW-0645">Protease</keyword>
<keyword id="KW-0732">Signal</keyword>
<keyword id="KW-0862">Zinc</keyword>
<protein>
    <recommendedName>
        <fullName evidence="1">Penicillin-insensitive murein endopeptidase</fullName>
        <ecNumber evidence="1">3.4.24.-</ecNumber>
    </recommendedName>
    <alternativeName>
        <fullName evidence="1">D-alanyl-D-alanine-endopeptidase</fullName>
        <shortName evidence="1">DD-endopeptidase</shortName>
    </alternativeName>
</protein>
<comment type="function">
    <text evidence="1">Murein endopeptidase that cleaves the D-alanyl-meso-2,6-diamino-pimelyl amide bond that connects peptidoglycan strands. Likely plays a role in the removal of murein from the sacculus.</text>
</comment>
<comment type="cofactor">
    <cofactor evidence="1">
        <name>Zn(2+)</name>
        <dbReference type="ChEBI" id="CHEBI:29105"/>
    </cofactor>
    <text evidence="1">Binds 2 Zn(2+) ions per subunit. Zn(2+) ion 1 is bound in the active site. Zn(2+) ion 2 is bound at the dimer interface by residues from both subunits.</text>
</comment>
<comment type="subunit">
    <text evidence="1">Dimer.</text>
</comment>
<comment type="subcellular location">
    <subcellularLocation>
        <location evidence="1">Periplasm</location>
    </subcellularLocation>
</comment>
<comment type="similarity">
    <text evidence="1">Belongs to the peptidase M74 family.</text>
</comment>